<gene>
    <name type="primary">cut12</name>
    <name type="synonym">stf1</name>
    <name type="ORF">SPBC649.05</name>
</gene>
<sequence>MSETLNTPPTYAWVLKAFSSKLAGTVTKPVTKMSSYIEDAESDAELPQDAKEDLRPTETLTPLKSKAAQNGILKTPGTLQIKKTVNFKDISKDAATWNRPTKNNFLFTRLDDENPLMGHEEFKSPLLQSTPKPNINNPDNENKSKHDEFDNRYNININESYKNETKSNQRLGEDVPSKKKYPHSMDAEISKFKWDSNNNNDWSSLMKDCFRDVVNNNRKMKEIIKDVMIDTSQAFPSESLDEPDYTINLDAPRSSSGKYWKQKFSMLDSAHSDLELELTSIRERLESLILEKQEEINFWKQRCRALETEKIHNHQGQQSKYKGKEFVGNRFSQMRELYTAKPSPITTKVVSRPSQSDVREPQEQVPSKNLHRGADMSHLAAQMLTHSSKKSHTTNLIPSEGIISSTPISAASKVRMNLMQSNQTPTPAPFSIAAKKSHLPSKLSFPQDGGSLSSATTLQQLPKARVTPNVLSSLSSNLGKTNPTSVYQSKANVTTSADVEKPQVKVATSSRVDYDLKSPNQRTANAKKRLEERRRRRKLKLQELQLNS</sequence>
<protein>
    <recommendedName>
        <fullName>Spindle pole body-associated protein cut12</fullName>
    </recommendedName>
    <alternativeName>
        <fullName>Cell untimely torn protein 12</fullName>
    </alternativeName>
</protein>
<accession>O59755</accession>
<name>CUT12_SCHPO</name>
<reference key="1">
    <citation type="journal article" date="1998" name="Genes Dev.">
        <title>The fission yeast SPB component Cut12 links bipolar spindle formation to mitotic control.</title>
        <authorList>
            <person name="Bridge A.J."/>
            <person name="Morphew M."/>
            <person name="Bartlett R."/>
            <person name="Hagan I.M."/>
        </authorList>
    </citation>
    <scope>NUCLEOTIDE SEQUENCE [GENOMIC DNA]</scope>
    <scope>FUNCTION</scope>
    <scope>SUBCELLULAR LOCATION</scope>
    <scope>MUTAGENESIS OF GLY-71</scope>
    <source>
        <strain>972 / ATCC 24843</strain>
    </source>
</reference>
<reference key="2">
    <citation type="journal article" date="2002" name="Nature">
        <title>The genome sequence of Schizosaccharomyces pombe.</title>
        <authorList>
            <person name="Wood V."/>
            <person name="Gwilliam R."/>
            <person name="Rajandream M.A."/>
            <person name="Lyne M.H."/>
            <person name="Lyne R."/>
            <person name="Stewart A."/>
            <person name="Sgouros J.G."/>
            <person name="Peat N."/>
            <person name="Hayles J."/>
            <person name="Baker S.G."/>
            <person name="Basham D."/>
            <person name="Bowman S."/>
            <person name="Brooks K."/>
            <person name="Brown D."/>
            <person name="Brown S."/>
            <person name="Chillingworth T."/>
            <person name="Churcher C.M."/>
            <person name="Collins M."/>
            <person name="Connor R."/>
            <person name="Cronin A."/>
            <person name="Davis P."/>
            <person name="Feltwell T."/>
            <person name="Fraser A."/>
            <person name="Gentles S."/>
            <person name="Goble A."/>
            <person name="Hamlin N."/>
            <person name="Harris D.E."/>
            <person name="Hidalgo J."/>
            <person name="Hodgson G."/>
            <person name="Holroyd S."/>
            <person name="Hornsby T."/>
            <person name="Howarth S."/>
            <person name="Huckle E.J."/>
            <person name="Hunt S."/>
            <person name="Jagels K."/>
            <person name="James K.D."/>
            <person name="Jones L."/>
            <person name="Jones M."/>
            <person name="Leather S."/>
            <person name="McDonald S."/>
            <person name="McLean J."/>
            <person name="Mooney P."/>
            <person name="Moule S."/>
            <person name="Mungall K.L."/>
            <person name="Murphy L.D."/>
            <person name="Niblett D."/>
            <person name="Odell C."/>
            <person name="Oliver K."/>
            <person name="O'Neil S."/>
            <person name="Pearson D."/>
            <person name="Quail M.A."/>
            <person name="Rabbinowitsch E."/>
            <person name="Rutherford K.M."/>
            <person name="Rutter S."/>
            <person name="Saunders D."/>
            <person name="Seeger K."/>
            <person name="Sharp S."/>
            <person name="Skelton J."/>
            <person name="Simmonds M.N."/>
            <person name="Squares R."/>
            <person name="Squares S."/>
            <person name="Stevens K."/>
            <person name="Taylor K."/>
            <person name="Taylor R.G."/>
            <person name="Tivey A."/>
            <person name="Walsh S.V."/>
            <person name="Warren T."/>
            <person name="Whitehead S."/>
            <person name="Woodward J.R."/>
            <person name="Volckaert G."/>
            <person name="Aert R."/>
            <person name="Robben J."/>
            <person name="Grymonprez B."/>
            <person name="Weltjens I."/>
            <person name="Vanstreels E."/>
            <person name="Rieger M."/>
            <person name="Schaefer M."/>
            <person name="Mueller-Auer S."/>
            <person name="Gabel C."/>
            <person name="Fuchs M."/>
            <person name="Duesterhoeft A."/>
            <person name="Fritzc C."/>
            <person name="Holzer E."/>
            <person name="Moestl D."/>
            <person name="Hilbert H."/>
            <person name="Borzym K."/>
            <person name="Langer I."/>
            <person name="Beck A."/>
            <person name="Lehrach H."/>
            <person name="Reinhardt R."/>
            <person name="Pohl T.M."/>
            <person name="Eger P."/>
            <person name="Zimmermann W."/>
            <person name="Wedler H."/>
            <person name="Wambutt R."/>
            <person name="Purnelle B."/>
            <person name="Goffeau A."/>
            <person name="Cadieu E."/>
            <person name="Dreano S."/>
            <person name="Gloux S."/>
            <person name="Lelaure V."/>
            <person name="Mottier S."/>
            <person name="Galibert F."/>
            <person name="Aves S.J."/>
            <person name="Xiang Z."/>
            <person name="Hunt C."/>
            <person name="Moore K."/>
            <person name="Hurst S.M."/>
            <person name="Lucas M."/>
            <person name="Rochet M."/>
            <person name="Gaillardin C."/>
            <person name="Tallada V.A."/>
            <person name="Garzon A."/>
            <person name="Thode G."/>
            <person name="Daga R.R."/>
            <person name="Cruzado L."/>
            <person name="Jimenez J."/>
            <person name="Sanchez M."/>
            <person name="del Rey F."/>
            <person name="Benito J."/>
            <person name="Dominguez A."/>
            <person name="Revuelta J.L."/>
            <person name="Moreno S."/>
            <person name="Armstrong J."/>
            <person name="Forsburg S.L."/>
            <person name="Cerutti L."/>
            <person name="Lowe T."/>
            <person name="McCombie W.R."/>
            <person name="Paulsen I."/>
            <person name="Potashkin J."/>
            <person name="Shpakovski G.V."/>
            <person name="Ussery D."/>
            <person name="Barrell B.G."/>
            <person name="Nurse P."/>
        </authorList>
    </citation>
    <scope>NUCLEOTIDE SEQUENCE [LARGE SCALE GENOMIC DNA]</scope>
    <source>
        <strain>972 / ATCC 24843</strain>
    </source>
</reference>
<reference key="3">
    <citation type="journal article" date="2003" name="Genes Dev.">
        <title>Physical and functional interactions between polo kinase and the spindle pole component Cut12 regulate mitotic commitment in S. pombe.</title>
        <authorList>
            <person name="MacIver F.H."/>
            <person name="Tanaka K."/>
            <person name="Robertson A.M."/>
            <person name="Hagan I.M."/>
        </authorList>
    </citation>
    <scope>FUNCTION</scope>
    <scope>SELF-ASSOCIATION</scope>
    <scope>INTERACTION WITH PLO1</scope>
</reference>
<feature type="chain" id="PRO_0000079567" description="Spindle pole body-associated protein cut12">
    <location>
        <begin position="1"/>
        <end position="548"/>
    </location>
</feature>
<feature type="region of interest" description="Interaction with plo1">
    <location>
        <begin position="122"/>
        <end position="325"/>
    </location>
</feature>
<feature type="region of interest" description="Disordered" evidence="2">
    <location>
        <begin position="123"/>
        <end position="182"/>
    </location>
</feature>
<feature type="region of interest" description="Disordered" evidence="2">
    <location>
        <begin position="344"/>
        <end position="369"/>
    </location>
</feature>
<feature type="region of interest" description="Disordered" evidence="2">
    <location>
        <begin position="510"/>
        <end position="548"/>
    </location>
</feature>
<feature type="coiled-coil region" evidence="1">
    <location>
        <begin position="261"/>
        <end position="312"/>
    </location>
</feature>
<feature type="coiled-coil region" evidence="1">
    <location>
        <begin position="522"/>
        <end position="548"/>
    </location>
</feature>
<feature type="compositionally biased region" description="Polar residues" evidence="2">
    <location>
        <begin position="126"/>
        <end position="139"/>
    </location>
</feature>
<feature type="compositionally biased region" description="Basic and acidic residues" evidence="2">
    <location>
        <begin position="140"/>
        <end position="151"/>
    </location>
</feature>
<feature type="compositionally biased region" description="Basic and acidic residues" evidence="2">
    <location>
        <begin position="161"/>
        <end position="182"/>
    </location>
</feature>
<feature type="compositionally biased region" description="Polar residues" evidence="2">
    <location>
        <begin position="344"/>
        <end position="356"/>
    </location>
</feature>
<feature type="mutagenesis site" description="In allele cut12.s11; causes inappropriate activation of plo1 kinase in interphase." evidence="4">
    <original>G</original>
    <variation>V</variation>
    <location>
        <position position="71"/>
    </location>
</feature>
<proteinExistence type="evidence at protein level"/>
<organism>
    <name type="scientific">Schizosaccharomyces pombe (strain 972 / ATCC 24843)</name>
    <name type="common">Fission yeast</name>
    <dbReference type="NCBI Taxonomy" id="284812"/>
    <lineage>
        <taxon>Eukaryota</taxon>
        <taxon>Fungi</taxon>
        <taxon>Dikarya</taxon>
        <taxon>Ascomycota</taxon>
        <taxon>Taphrinomycotina</taxon>
        <taxon>Schizosaccharomycetes</taxon>
        <taxon>Schizosaccharomycetales</taxon>
        <taxon>Schizosaccharomycetaceae</taxon>
        <taxon>Schizosaccharomyces</taxon>
    </lineage>
</organism>
<dbReference type="EMBL" id="Y16837">
    <property type="protein sequence ID" value="CAA76407.1"/>
    <property type="molecule type" value="Genomic_DNA"/>
</dbReference>
<dbReference type="EMBL" id="CU329671">
    <property type="protein sequence ID" value="CAA19047.1"/>
    <property type="molecule type" value="Genomic_DNA"/>
</dbReference>
<dbReference type="PIR" id="T40598">
    <property type="entry name" value="T40598"/>
</dbReference>
<dbReference type="RefSeq" id="NP_595224.1">
    <property type="nucleotide sequence ID" value="NM_001021130.2"/>
</dbReference>
<dbReference type="SMR" id="O59755"/>
<dbReference type="BioGRID" id="277656">
    <property type="interactions" value="19"/>
</dbReference>
<dbReference type="DIP" id="DIP-35380N"/>
<dbReference type="FunCoup" id="O59755">
    <property type="interactions" value="5"/>
</dbReference>
<dbReference type="IntAct" id="O59755">
    <property type="interactions" value="5"/>
</dbReference>
<dbReference type="MINT" id="O59755"/>
<dbReference type="STRING" id="284812.O59755"/>
<dbReference type="iPTMnet" id="O59755"/>
<dbReference type="PaxDb" id="4896-SPBC649.05.1"/>
<dbReference type="EnsemblFungi" id="SPBC649.05.1">
    <property type="protein sequence ID" value="SPBC649.05.1:pep"/>
    <property type="gene ID" value="SPBC649.05"/>
</dbReference>
<dbReference type="GeneID" id="2541141"/>
<dbReference type="KEGG" id="spo:2541141"/>
<dbReference type="PomBase" id="SPBC649.05">
    <property type="gene designation" value="cut12"/>
</dbReference>
<dbReference type="VEuPathDB" id="FungiDB:SPBC649.05"/>
<dbReference type="HOGENOM" id="CLU_473405_0_0_1"/>
<dbReference type="InParanoid" id="O59755"/>
<dbReference type="OMA" id="PPTYAWV"/>
<dbReference type="CD-CODE" id="576F0A76">
    <property type="entry name" value="Centrosome"/>
</dbReference>
<dbReference type="PRO" id="PR:O59755"/>
<dbReference type="Proteomes" id="UP000002485">
    <property type="component" value="Chromosome II"/>
</dbReference>
<dbReference type="GO" id="GO:0005737">
    <property type="term" value="C:cytoplasm"/>
    <property type="evidence" value="ECO:0007669"/>
    <property type="project" value="UniProtKB-KW"/>
</dbReference>
<dbReference type="GO" id="GO:0061497">
    <property type="term" value="C:inner plaque of mitotic spindle pole body"/>
    <property type="evidence" value="ECO:0000314"/>
    <property type="project" value="PomBase"/>
</dbReference>
<dbReference type="GO" id="GO:0035974">
    <property type="term" value="C:meiotic spindle pole body"/>
    <property type="evidence" value="ECO:0000314"/>
    <property type="project" value="PomBase"/>
</dbReference>
<dbReference type="GO" id="GO:0015630">
    <property type="term" value="C:microtubule cytoskeleton"/>
    <property type="evidence" value="ECO:0007005"/>
    <property type="project" value="PomBase"/>
</dbReference>
<dbReference type="GO" id="GO:0044732">
    <property type="term" value="C:mitotic spindle pole body"/>
    <property type="evidence" value="ECO:0007005"/>
    <property type="project" value="PomBase"/>
</dbReference>
<dbReference type="GO" id="GO:0005634">
    <property type="term" value="C:nucleus"/>
    <property type="evidence" value="ECO:0007005"/>
    <property type="project" value="PomBase"/>
</dbReference>
<dbReference type="GO" id="GO:0030295">
    <property type="term" value="F:protein kinase activator activity"/>
    <property type="evidence" value="ECO:0000269"/>
    <property type="project" value="PomBase"/>
</dbReference>
<dbReference type="GO" id="GO:0035591">
    <property type="term" value="F:signaling adaptor activity"/>
    <property type="evidence" value="ECO:0000353"/>
    <property type="project" value="PomBase"/>
</dbReference>
<dbReference type="GO" id="GO:0051301">
    <property type="term" value="P:cell division"/>
    <property type="evidence" value="ECO:0007669"/>
    <property type="project" value="UniProtKB-KW"/>
</dbReference>
<dbReference type="GO" id="GO:0000086">
    <property type="term" value="P:G2/M transition of mitotic cell cycle"/>
    <property type="evidence" value="ECO:0000269"/>
    <property type="project" value="PomBase"/>
</dbReference>
<dbReference type="GO" id="GO:0140480">
    <property type="term" value="P:mitotic spindle pole body insertion into the nuclear envelope"/>
    <property type="evidence" value="ECO:0000315"/>
    <property type="project" value="PomBase"/>
</dbReference>
<dbReference type="GO" id="GO:0010972">
    <property type="term" value="P:negative regulation of G2/M transition of mitotic cell cycle"/>
    <property type="evidence" value="ECO:0000315"/>
    <property type="project" value="PomBase"/>
</dbReference>
<dbReference type="GO" id="GO:0110161">
    <property type="term" value="P:positive regulation of mitotic spindle formation (spindle phase one)"/>
    <property type="evidence" value="ECO:0000315"/>
    <property type="project" value="PomBase"/>
</dbReference>
<dbReference type="InterPro" id="IPR021589">
    <property type="entry name" value="Cut12"/>
</dbReference>
<dbReference type="Pfam" id="PF11500">
    <property type="entry name" value="Cut12"/>
    <property type="match status" value="1"/>
</dbReference>
<comment type="function">
    <text evidence="3 4">Required for bipolar spindle formation. May act as a regulator of the p34cdc2/cyclin B kinase. Required for full activation of the plo1 kinase. However, in cut12.1 cells at restrictive temperature the H1 kinase does rise concomitant with entry into mitosis, indicating that cut12 is not required for activation of p34cdc2/cyclin B. The cut12.s11 allele may promote cdc2-independent phosphorylation of SPB proteins thereby overcoming the requirement for cdc25 in cell cycle progression.</text>
</comment>
<comment type="subunit">
    <text evidence="3">Self-associates. Interacts with plo1.</text>
</comment>
<comment type="interaction">
    <interactant intactId="EBI-1112619">
        <id>O59755</id>
    </interactant>
    <interactant intactId="EBI-1112601">
        <id>P50528</id>
        <label>plo1</label>
    </interactant>
    <organismsDiffer>false</organismsDiffer>
    <experiments>3</experiments>
</comment>
<comment type="subcellular location">
    <subcellularLocation>
        <location evidence="4">Cytoplasm</location>
        <location evidence="4">Cytoskeleton</location>
        <location evidence="4">Microtubule organizing center</location>
        <location evidence="4">Spindle pole body</location>
    </subcellularLocation>
</comment>
<evidence type="ECO:0000255" key="1"/>
<evidence type="ECO:0000256" key="2">
    <source>
        <dbReference type="SAM" id="MobiDB-lite"/>
    </source>
</evidence>
<evidence type="ECO:0000269" key="3">
    <source>
    </source>
</evidence>
<evidence type="ECO:0000269" key="4">
    <source>
    </source>
</evidence>
<keyword id="KW-0131">Cell cycle</keyword>
<keyword id="KW-0132">Cell division</keyword>
<keyword id="KW-0175">Coiled coil</keyword>
<keyword id="KW-0963">Cytoplasm</keyword>
<keyword id="KW-0206">Cytoskeleton</keyword>
<keyword id="KW-0498">Mitosis</keyword>
<keyword id="KW-1185">Reference proteome</keyword>